<keyword id="KW-0002">3D-structure</keyword>
<keyword id="KW-0240">DNA-directed RNA polymerase</keyword>
<keyword id="KW-0548">Nucleotidyltransferase</keyword>
<keyword id="KW-0597">Phosphoprotein</keyword>
<keyword id="KW-1185">Reference proteome</keyword>
<keyword id="KW-0804">Transcription</keyword>
<keyword id="KW-0808">Transferase</keyword>
<keyword id="KW-0946">Virion</keyword>
<proteinExistence type="evidence at protein level"/>
<organismHost>
    <name type="scientific">Bos taurus</name>
    <name type="common">Bovine</name>
    <dbReference type="NCBI Taxonomy" id="9913"/>
</organismHost>
<gene>
    <name type="primary">OPG156</name>
    <name type="synonym">RPO35</name>
    <name type="ordered locus">VACWR152</name>
    <name type="ORF">A29L</name>
</gene>
<organism>
    <name type="scientific">Vaccinia virus (strain Western Reserve)</name>
    <name type="common">VACV</name>
    <name type="synonym">Vaccinia virus (strain WR)</name>
    <dbReference type="NCBI Taxonomy" id="10254"/>
    <lineage>
        <taxon>Viruses</taxon>
        <taxon>Varidnaviria</taxon>
        <taxon>Bamfordvirae</taxon>
        <taxon>Nucleocytoviricota</taxon>
        <taxon>Pokkesviricetes</taxon>
        <taxon>Chitovirales</taxon>
        <taxon>Poxviridae</taxon>
        <taxon>Chordopoxvirinae</taxon>
        <taxon>Orthopoxvirus</taxon>
        <taxon>Vaccinia virus</taxon>
    </lineage>
</organism>
<sequence>MQHPREENSIVVELEPSLATFIKQGFNNLVKWPLLNIGIVLSNTSTAVNEEWLTAVEHIPTMKIFYKHIHKILTREMGFLVYLKRSQSERDNYITLYDFDYYIIDKDTNSVTMVDKPTELKETLLHVFQEYRLKSSQTIELIAFSSGTVINEDIVSKLTFLDVEVFNREYNNVKTIIDPDFVFRSPFIVISPMGKLTFFVEVYSWFDFKSCLKDIIDFLEGALIANIHNHMIKVGNCDETVSSYNPESGMLFVNDLMTMNIVNFFGCNSRLESYHRFDMTKVDVELFIKALSDACKKILSASNRL</sequence>
<accession>P24757</accession>
<comment type="function">
    <text>Part of the DNA-dependent RNA polymerase which catalyzes the transcription of viral DNA into RNA using the four ribonucleoside triphosphates as substrates. Responsible for the transcription of early, intermediate and late genes. DNA-dependent RNA polymerase associates with the early transcription factor (ETF), itself composed of D6 and A7, thereby allowing the early genes transcription. Late transcription, and probably also intermediate transcription, require newly synthesized RNA polymerase.</text>
</comment>
<comment type="catalytic activity">
    <reaction>
        <text>RNA(n) + a ribonucleoside 5'-triphosphate = RNA(n+1) + diphosphate</text>
        <dbReference type="Rhea" id="RHEA:21248"/>
        <dbReference type="Rhea" id="RHEA-COMP:14527"/>
        <dbReference type="Rhea" id="RHEA-COMP:17342"/>
        <dbReference type="ChEBI" id="CHEBI:33019"/>
        <dbReference type="ChEBI" id="CHEBI:61557"/>
        <dbReference type="ChEBI" id="CHEBI:140395"/>
        <dbReference type="EC" id="2.7.7.6"/>
    </reaction>
</comment>
<comment type="subunit">
    <text>The DNA-dependent RNA polymerase used for intermediate and late genes expression consists of eight subunits 147 kDa, 133 kDa, 35 kDa, 30 kDa, 22 kDa, 19 kDa, 18 kDa and 7 kDa totalling more than 500 kDa in mass. The same holoenzyme, with the addition of the transcription-specificity factor RAP94, is used for early gene expression.</text>
</comment>
<comment type="subcellular location">
    <subcellularLocation>
        <location evidence="1">Virion</location>
    </subcellularLocation>
    <text>All the enzymes and other proteins required to synthesize early mRNAs are packaged within the virion core along with the DNA genome. This is necessary because viral early mRNAs are synthesized within minutes after virus entry into the cell and are extruded through pores in the core particle.</text>
</comment>
<comment type="similarity">
    <text evidence="1">Belongs to the poxviridae DNA-directed RNA polymerase 35 kDa subunit family.</text>
</comment>
<reference key="1">
    <citation type="journal article" date="1991" name="J. Biol. Chem.">
        <title>Identification, sequence, and expression of the gene encoding a Mr 35,000 subunit of the vaccinia virus DNA-dependent RNA polymerase.</title>
        <authorList>
            <person name="Amegadzie B.Y."/>
            <person name="Ahn B.-Y."/>
            <person name="Moss B."/>
        </authorList>
    </citation>
    <scope>NUCLEOTIDE SEQUENCE [GENOMIC DNA]</scope>
</reference>
<reference key="2">
    <citation type="submission" date="2003-02" db="EMBL/GenBank/DDBJ databases">
        <title>Sequencing of the coding region of Vaccinia-WR to an average 9-fold redundancy and an error rate of 0.16/10kb.</title>
        <authorList>
            <person name="Esposito J.J."/>
            <person name="Frace A.M."/>
            <person name="Sammons S.A."/>
            <person name="Olsen-Rasmussen M."/>
            <person name="Osborne J."/>
            <person name="Wohlhueter R."/>
        </authorList>
    </citation>
    <scope>NUCLEOTIDE SEQUENCE [LARGE SCALE GENOMIC DNA]</scope>
</reference>
<reference key="3">
    <citation type="journal article" date="2003" name="J. Gen. Virol.">
        <title>Vaccinia virus transcription.</title>
        <authorList>
            <person name="Broyles S.S."/>
        </authorList>
    </citation>
    <scope>REVIEW</scope>
</reference>
<reference key="4">
    <citation type="journal article" date="2006" name="Virol. J.">
        <title>Pox proteomics: mass spectrometry analysis and identification of Vaccinia virion proteins.</title>
        <authorList>
            <person name="Yoder J.D."/>
            <person name="Chen T.S."/>
            <person name="Gagnier C.R."/>
            <person name="Vemulapalli S."/>
            <person name="Maier C.S."/>
            <person name="Hruby D.E."/>
        </authorList>
    </citation>
    <scope>IDENTIFICATION BY MASS SPECTROMETRY</scope>
</reference>
<protein>
    <recommendedName>
        <fullName>DNA-directed RNA polymerase 35 kDa subunit</fullName>
        <ecNumber>2.7.7.6</ecNumber>
    </recommendedName>
</protein>
<evidence type="ECO:0000305" key="1"/>
<dbReference type="EC" id="2.7.7.6"/>
<dbReference type="EMBL" id="M61187">
    <property type="protein sequence ID" value="AAA48326.1"/>
    <property type="molecule type" value="Genomic_DNA"/>
</dbReference>
<dbReference type="EMBL" id="X57318">
    <property type="protein sequence ID" value="CAA40579.1"/>
    <property type="molecule type" value="Genomic_DNA"/>
</dbReference>
<dbReference type="EMBL" id="AY243312">
    <property type="protein sequence ID" value="AAO89431.1"/>
    <property type="molecule type" value="Genomic_DNA"/>
</dbReference>
<dbReference type="PIR" id="A39460">
    <property type="entry name" value="RNVZ35"/>
</dbReference>
<dbReference type="PDB" id="8C8H">
    <property type="method" value="EM"/>
    <property type="resolution" value="3.84 A"/>
    <property type="chains" value="C=1-305"/>
</dbReference>
<dbReference type="PDBsum" id="8C8H"/>
<dbReference type="EMDB" id="EMD-16476"/>
<dbReference type="SMR" id="P24757"/>
<dbReference type="KEGG" id="vg:3707682"/>
<dbReference type="Proteomes" id="UP000000344">
    <property type="component" value="Genome"/>
</dbReference>
<dbReference type="GO" id="GO:0000428">
    <property type="term" value="C:DNA-directed RNA polymerase complex"/>
    <property type="evidence" value="ECO:0007669"/>
    <property type="project" value="UniProtKB-KW"/>
</dbReference>
<dbReference type="GO" id="GO:0044423">
    <property type="term" value="C:virion component"/>
    <property type="evidence" value="ECO:0007669"/>
    <property type="project" value="UniProtKB-KW"/>
</dbReference>
<dbReference type="GO" id="GO:0003677">
    <property type="term" value="F:DNA binding"/>
    <property type="evidence" value="ECO:0007669"/>
    <property type="project" value="InterPro"/>
</dbReference>
<dbReference type="GO" id="GO:0003899">
    <property type="term" value="F:DNA-directed RNA polymerase activity"/>
    <property type="evidence" value="ECO:0007669"/>
    <property type="project" value="UniProtKB-EC"/>
</dbReference>
<dbReference type="GO" id="GO:0019083">
    <property type="term" value="P:viral transcription"/>
    <property type="evidence" value="ECO:0007669"/>
    <property type="project" value="InterPro"/>
</dbReference>
<dbReference type="InterPro" id="IPR005059">
    <property type="entry name" value="DNA-dir_RNA_pol_35kDa_poxviral"/>
</dbReference>
<dbReference type="Pfam" id="PF03396">
    <property type="entry name" value="Pox_RNA_pol_35"/>
    <property type="match status" value="1"/>
</dbReference>
<dbReference type="PIRSF" id="PIRSF000746">
    <property type="entry name" value="Rpo35"/>
    <property type="match status" value="1"/>
</dbReference>
<name>RP35_VACCW</name>
<feature type="chain" id="PRO_0000099134" description="DNA-directed RNA polymerase 35 kDa subunit">
    <location>
        <begin position="1"/>
        <end position="305"/>
    </location>
</feature>